<reference key="1">
    <citation type="journal article" date="2010" name="Appl. Environ. Microbiol.">
        <title>Conserved symbiotic plasmid DNA sequences in the multireplicon pangenomic structure of Rhizobium etli.</title>
        <authorList>
            <person name="Gonzalez V."/>
            <person name="Acosta J.L."/>
            <person name="Santamaria R.I."/>
            <person name="Bustos P."/>
            <person name="Fernandez J.L."/>
            <person name="Hernandez Gonzalez I.L."/>
            <person name="Diaz R."/>
            <person name="Flores M."/>
            <person name="Palacios R."/>
            <person name="Mora J."/>
            <person name="Davila G."/>
        </authorList>
    </citation>
    <scope>NUCLEOTIDE SEQUENCE [LARGE SCALE GENOMIC DNA]</scope>
    <source>
        <strain>CIAT 652</strain>
    </source>
</reference>
<organism>
    <name type="scientific">Rhizobium etli (strain CIAT 652)</name>
    <dbReference type="NCBI Taxonomy" id="491916"/>
    <lineage>
        <taxon>Bacteria</taxon>
        <taxon>Pseudomonadati</taxon>
        <taxon>Pseudomonadota</taxon>
        <taxon>Alphaproteobacteria</taxon>
        <taxon>Hyphomicrobiales</taxon>
        <taxon>Rhizobiaceae</taxon>
        <taxon>Rhizobium/Agrobacterium group</taxon>
        <taxon>Rhizobium</taxon>
    </lineage>
</organism>
<sequence>MSPPWKLFADHLRLTVRLTPNGGRDAFDGIETGSEGETYLKARVTAIPEKGKANKALIALVSKSLGVAKSSITLVSGETARKKILRIEGDPEDLAKKLETLSG</sequence>
<gene>
    <name type="ordered locus">RHECIAT_CH0004196</name>
</gene>
<accession>B3PQB3</accession>
<dbReference type="EMBL" id="CP001074">
    <property type="protein sequence ID" value="ACE93125.1"/>
    <property type="molecule type" value="Genomic_DNA"/>
</dbReference>
<dbReference type="SMR" id="B3PQB3"/>
<dbReference type="KEGG" id="rec:RHECIAT_CH0004196"/>
<dbReference type="eggNOG" id="COG1872">
    <property type="taxonomic scope" value="Bacteria"/>
</dbReference>
<dbReference type="HOGENOM" id="CLU_130694_3_0_5"/>
<dbReference type="Proteomes" id="UP000008817">
    <property type="component" value="Chromosome"/>
</dbReference>
<dbReference type="Gene3D" id="3.30.1200.10">
    <property type="entry name" value="YggU-like"/>
    <property type="match status" value="1"/>
</dbReference>
<dbReference type="HAMAP" id="MF_00634">
    <property type="entry name" value="UPF0235"/>
    <property type="match status" value="1"/>
</dbReference>
<dbReference type="InterPro" id="IPR003746">
    <property type="entry name" value="DUF167"/>
</dbReference>
<dbReference type="InterPro" id="IPR036591">
    <property type="entry name" value="YggU-like_sf"/>
</dbReference>
<dbReference type="NCBIfam" id="TIGR00251">
    <property type="entry name" value="DUF167 family protein"/>
    <property type="match status" value="1"/>
</dbReference>
<dbReference type="NCBIfam" id="NF002348">
    <property type="entry name" value="PRK01310.1"/>
    <property type="match status" value="1"/>
</dbReference>
<dbReference type="Pfam" id="PF02594">
    <property type="entry name" value="DUF167"/>
    <property type="match status" value="1"/>
</dbReference>
<dbReference type="SMART" id="SM01152">
    <property type="entry name" value="DUF167"/>
    <property type="match status" value="1"/>
</dbReference>
<dbReference type="SUPFAM" id="SSF69786">
    <property type="entry name" value="YggU-like"/>
    <property type="match status" value="1"/>
</dbReference>
<evidence type="ECO:0000255" key="1">
    <source>
        <dbReference type="HAMAP-Rule" id="MF_00634"/>
    </source>
</evidence>
<name>Y4196_RHIE6</name>
<feature type="chain" id="PRO_1000130702" description="UPF0235 protein RHECIAT_CH0004196">
    <location>
        <begin position="1"/>
        <end position="103"/>
    </location>
</feature>
<protein>
    <recommendedName>
        <fullName evidence="1">UPF0235 protein RHECIAT_CH0004196</fullName>
    </recommendedName>
</protein>
<proteinExistence type="inferred from homology"/>
<comment type="similarity">
    <text evidence="1">Belongs to the UPF0235 family.</text>
</comment>